<comment type="function">
    <text>This cell-surface glycoprotein mediates cell-cell binding via homophilic interaction.</text>
</comment>
<comment type="subcellular location">
    <subcellularLocation>
        <location>Cell membrane</location>
        <topology>Lipid-anchor</topology>
        <topology>GPI-anchor</topology>
    </subcellularLocation>
    <text>Attached to the membrane by a GPI-anchor that contains a phosphoceramide moiety. Such anchor mediates a fast and long persistence cell adhesion of the protein.</text>
</comment>
<comment type="developmental stage">
    <text>Restricted to the aggregation stage of development of D.discoideum.</text>
</comment>
<comment type="domain">
    <text>The C-terminal region contains clusters of proline regularly alternating with a hydroxyamino acid. This domain might act as a spacer to elevate sites active in cell contact into the extracellular space.</text>
</comment>
<comment type="PTM">
    <text>Phosphorylated on serine and N-glycosylated with two types of oligosaccharide chains.</text>
</comment>
<comment type="PTM">
    <text>The GPI-like-anchor contains a phosphoceramide group, rather than a phosphatidyl group.</text>
</comment>
<comment type="miscellaneous">
    <text>The expression of this stringently regulated protein during cell development is mediated through cell-surface cAMP receptors.</text>
</comment>
<comment type="caution">
    <text evidence="5">The Dictyosteliida are known to produce a glycosylsphingolipidinositol anchor (GPI-like-anchor). It has not been established whether Dictyosteliida make a glycosylphosphatidylinositol anchor (GPI-anchor) also, and whether their GPI-like-anchor modifications can be interconverted with GPI-anchor modifications in a resculpting process. It has not been established that the GPI-like-anchor modification in Dictyosteliida utilizes the same sequence motif.</text>
</comment>
<name>CSA_DICDI</name>
<gene>
    <name type="primary">csaA</name>
    <name type="ORF">DDB_G0289073</name>
</gene>
<keyword id="KW-0130">Cell adhesion</keyword>
<keyword id="KW-1003">Cell membrane</keyword>
<keyword id="KW-0903">Direct protein sequencing</keyword>
<keyword id="KW-0325">Glycoprotein</keyword>
<keyword id="KW-0336">GPI-anchor</keyword>
<keyword id="KW-0449">Lipoprotein</keyword>
<keyword id="KW-0472">Membrane</keyword>
<keyword id="KW-0597">Phosphoprotein</keyword>
<keyword id="KW-1185">Reference proteome</keyword>
<keyword id="KW-0677">Repeat</keyword>
<keyword id="KW-0732">Signal</keyword>
<protein>
    <recommendedName>
        <fullName>Contact site A protein</fullName>
        <shortName>CSA</shortName>
    </recommendedName>
    <alternativeName>
        <fullName>Cell adhesion molecule gp80</fullName>
    </alternativeName>
    <alternativeName>
        <fullName>Membrane-associated glycoprotein gp80</fullName>
    </alternativeName>
</protein>
<proteinExistence type="evidence at protein level"/>
<dbReference type="EMBL" id="X04004">
    <property type="protein sequence ID" value="CAA27634.1"/>
    <property type="molecule type" value="mRNA"/>
</dbReference>
<dbReference type="EMBL" id="M36545">
    <property type="protein sequence ID" value="AAA33212.1"/>
    <property type="molecule type" value="mRNA"/>
</dbReference>
<dbReference type="EMBL" id="X66483">
    <property type="protein sequence ID" value="CAA47110.1"/>
    <property type="molecule type" value="Genomic_DNA"/>
</dbReference>
<dbReference type="EMBL" id="AAFI02000130">
    <property type="protein sequence ID" value="EAL62886.1"/>
    <property type="molecule type" value="Genomic_DNA"/>
</dbReference>
<dbReference type="PIR" id="A44100">
    <property type="entry name" value="A44100"/>
</dbReference>
<dbReference type="PIR" id="S22066">
    <property type="entry name" value="A31643"/>
</dbReference>
<dbReference type="RefSeq" id="XP_636399.1">
    <property type="nucleotide sequence ID" value="XM_631307.1"/>
</dbReference>
<dbReference type="STRING" id="44689.P08796"/>
<dbReference type="GlyCosmos" id="P08796">
    <property type="glycosylation" value="5 sites, No reported glycans"/>
</dbReference>
<dbReference type="GlyGen" id="P08796">
    <property type="glycosylation" value="10 sites"/>
</dbReference>
<dbReference type="PaxDb" id="44689-DDB0191156"/>
<dbReference type="ABCD" id="P08796">
    <property type="antibodies" value="2 sequenced antibodies"/>
</dbReference>
<dbReference type="EnsemblProtists" id="EAL62886">
    <property type="protein sequence ID" value="EAL62886"/>
    <property type="gene ID" value="DDB_G0289073"/>
</dbReference>
<dbReference type="GeneID" id="8626958"/>
<dbReference type="KEGG" id="ddi:DDB_G0289073"/>
<dbReference type="dictyBase" id="DDB_G0289073">
    <property type="gene designation" value="csaA"/>
</dbReference>
<dbReference type="VEuPathDB" id="AmoebaDB:DDB_G0289073"/>
<dbReference type="eggNOG" id="ENOG502RI6S">
    <property type="taxonomic scope" value="Eukaryota"/>
</dbReference>
<dbReference type="HOGENOM" id="CLU_530458_0_0_1"/>
<dbReference type="InParanoid" id="P08796"/>
<dbReference type="OMA" id="TDIVCAP"/>
<dbReference type="PhylomeDB" id="P08796"/>
<dbReference type="PRO" id="PR:P08796"/>
<dbReference type="Proteomes" id="UP000002195">
    <property type="component" value="Chromosome 5"/>
</dbReference>
<dbReference type="GO" id="GO:0009986">
    <property type="term" value="C:cell surface"/>
    <property type="evidence" value="ECO:0000304"/>
    <property type="project" value="dictyBase"/>
</dbReference>
<dbReference type="GO" id="GO:0005911">
    <property type="term" value="C:cell-cell junction"/>
    <property type="evidence" value="ECO:0000314"/>
    <property type="project" value="dictyBase"/>
</dbReference>
<dbReference type="GO" id="GO:0009897">
    <property type="term" value="C:external side of plasma membrane"/>
    <property type="evidence" value="ECO:0000314"/>
    <property type="project" value="dictyBase"/>
</dbReference>
<dbReference type="GO" id="GO:0030175">
    <property type="term" value="C:filopodium"/>
    <property type="evidence" value="ECO:0000314"/>
    <property type="project" value="dictyBase"/>
</dbReference>
<dbReference type="GO" id="GO:0045121">
    <property type="term" value="C:membrane raft"/>
    <property type="evidence" value="ECO:0000304"/>
    <property type="project" value="dictyBase"/>
</dbReference>
<dbReference type="GO" id="GO:0005886">
    <property type="term" value="C:plasma membrane"/>
    <property type="evidence" value="ECO:0000314"/>
    <property type="project" value="dictyBase"/>
</dbReference>
<dbReference type="GO" id="GO:0098632">
    <property type="term" value="F:cell-cell adhesion mediator activity"/>
    <property type="evidence" value="ECO:0000314"/>
    <property type="project" value="dictyBase"/>
</dbReference>
<dbReference type="GO" id="GO:0042802">
    <property type="term" value="F:identical protein binding"/>
    <property type="evidence" value="ECO:0000353"/>
    <property type="project" value="dictyBase"/>
</dbReference>
<dbReference type="GO" id="GO:0031152">
    <property type="term" value="P:aggregation involved in sorocarp development"/>
    <property type="evidence" value="ECO:0000315"/>
    <property type="project" value="dictyBase"/>
</dbReference>
<dbReference type="GO" id="GO:0016338">
    <property type="term" value="P:calcium-independent cell-cell adhesion via plasma membrane cell-adhesion molecules"/>
    <property type="evidence" value="ECO:0000315"/>
    <property type="project" value="dictyBase"/>
</dbReference>
<dbReference type="GO" id="GO:0098609">
    <property type="term" value="P:cell-cell adhesion"/>
    <property type="evidence" value="ECO:0000315"/>
    <property type="project" value="dictyBase"/>
</dbReference>
<dbReference type="GO" id="GO:0098742">
    <property type="term" value="P:cell-cell adhesion via plasma-membrane adhesion molecules"/>
    <property type="evidence" value="ECO:0000314"/>
    <property type="project" value="dictyBase"/>
</dbReference>
<dbReference type="GO" id="GO:0030866">
    <property type="term" value="P:cortical actin cytoskeleton organization"/>
    <property type="evidence" value="ECO:0000304"/>
    <property type="project" value="dictyBase"/>
</dbReference>
<dbReference type="GO" id="GO:0007156">
    <property type="term" value="P:homophilic cell adhesion via plasma membrane adhesion molecules"/>
    <property type="evidence" value="ECO:0000314"/>
    <property type="project" value="dictyBase"/>
</dbReference>
<dbReference type="GO" id="GO:1904643">
    <property type="term" value="P:response to curcumin"/>
    <property type="evidence" value="ECO:0000314"/>
    <property type="project" value="dictyBase"/>
</dbReference>
<dbReference type="GO" id="GO:0010225">
    <property type="term" value="P:response to UV-C"/>
    <property type="evidence" value="ECO:0000314"/>
    <property type="project" value="dictyBase"/>
</dbReference>
<dbReference type="GO" id="GO:0030587">
    <property type="term" value="P:sorocarp development"/>
    <property type="evidence" value="ECO:0000315"/>
    <property type="project" value="dictyBase"/>
</dbReference>
<dbReference type="Gene3D" id="2.60.40.10">
    <property type="entry name" value="Immunoglobulins"/>
    <property type="match status" value="1"/>
</dbReference>
<dbReference type="InterPro" id="IPR052014">
    <property type="entry name" value="Dictyostelium_Tiger"/>
</dbReference>
<dbReference type="InterPro" id="IPR013783">
    <property type="entry name" value="Ig-like_fold"/>
</dbReference>
<dbReference type="InterPro" id="IPR014756">
    <property type="entry name" value="Ig_E-set"/>
</dbReference>
<dbReference type="PANTHER" id="PTHR31341:SF16">
    <property type="entry name" value="CONTACT SITE A PROTEIN"/>
    <property type="match status" value="1"/>
</dbReference>
<dbReference type="PANTHER" id="PTHR31341">
    <property type="entry name" value="IPT/TIG DOMAIN-CONTAINING PROTEIN-RELATED-RELATED"/>
    <property type="match status" value="1"/>
</dbReference>
<dbReference type="SUPFAM" id="SSF81296">
    <property type="entry name" value="E set domains"/>
    <property type="match status" value="2"/>
</dbReference>
<evidence type="ECO:0000255" key="1"/>
<evidence type="ECO:0000256" key="2">
    <source>
        <dbReference type="SAM" id="MobiDB-lite"/>
    </source>
</evidence>
<evidence type="ECO:0000269" key="3">
    <source>
    </source>
</evidence>
<evidence type="ECO:0000269" key="4">
    <source>
    </source>
</evidence>
<evidence type="ECO:0000305" key="5"/>
<feature type="signal peptide" evidence="3 4">
    <location>
        <begin position="1"/>
        <end position="19"/>
    </location>
</feature>
<feature type="chain" id="PRO_0000021010" description="Contact site A protein">
    <location>
        <begin position="20"/>
        <end position="492"/>
    </location>
</feature>
<feature type="propeptide" id="PRO_0000021011" description="Removed in mature form" evidence="1">
    <location>
        <begin position="493"/>
        <end position="514"/>
    </location>
</feature>
<feature type="domain" description="IPT/TIG 1">
    <location>
        <begin position="21"/>
        <end position="104"/>
    </location>
</feature>
<feature type="domain" description="IPT/TIG 2">
    <location>
        <begin position="191"/>
        <end position="283"/>
    </location>
</feature>
<feature type="repeat" description="1">
    <location>
        <begin position="462"/>
        <end position="469"/>
    </location>
</feature>
<feature type="repeat" description="2">
    <location>
        <begin position="472"/>
        <end position="479"/>
    </location>
</feature>
<feature type="region of interest" description="Globular" evidence="1">
    <location>
        <begin position="20"/>
        <end position="453"/>
    </location>
</feature>
<feature type="region of interest" description="Disordered" evidence="2">
    <location>
        <begin position="446"/>
        <end position="494"/>
    </location>
</feature>
<feature type="region of interest" description="2 X 8 AA repeats, Pro-rich">
    <location>
        <begin position="462"/>
        <end position="479"/>
    </location>
</feature>
<feature type="compositionally biased region" description="Low complexity" evidence="2">
    <location>
        <begin position="446"/>
        <end position="475"/>
    </location>
</feature>
<feature type="compositionally biased region" description="Low complexity" evidence="2">
    <location>
        <begin position="483"/>
        <end position="494"/>
    </location>
</feature>
<feature type="lipid moiety-binding region" description="GPI-like-anchor amidated serine" evidence="1">
    <location>
        <position position="492"/>
    </location>
</feature>
<feature type="glycosylation site" description="N-linked (GlcNAc...) asparagine" evidence="1">
    <location>
        <position position="128"/>
    </location>
</feature>
<feature type="glycosylation site" description="N-linked (GlcNAc...) asparagine" evidence="1">
    <location>
        <position position="137"/>
    </location>
</feature>
<feature type="glycosylation site" description="N-linked (GlcNAc...) asparagine" evidence="1">
    <location>
        <position position="207"/>
    </location>
</feature>
<feature type="glycosylation site" description="N-linked (GlcNAc...) asparagine" evidence="1">
    <location>
        <position position="294"/>
    </location>
</feature>
<feature type="glycosylation site" description="N-linked (GlcNAc...) asparagine" evidence="1">
    <location>
        <position position="399"/>
    </location>
</feature>
<feature type="sequence conflict" description="In Ref. 2; AAA33212 and 3; CAA47110." evidence="5" ref="2 3">
    <original>G</original>
    <variation>V</variation>
    <location>
        <position position="216"/>
    </location>
</feature>
<organism>
    <name type="scientific">Dictyostelium discoideum</name>
    <name type="common">Social amoeba</name>
    <dbReference type="NCBI Taxonomy" id="44689"/>
    <lineage>
        <taxon>Eukaryota</taxon>
        <taxon>Amoebozoa</taxon>
        <taxon>Evosea</taxon>
        <taxon>Eumycetozoa</taxon>
        <taxon>Dictyostelia</taxon>
        <taxon>Dictyosteliales</taxon>
        <taxon>Dictyosteliaceae</taxon>
        <taxon>Dictyostelium</taxon>
    </lineage>
</organism>
<accession>P08796</accession>
<accession>P19408</accession>
<accession>Q54I06</accession>
<reference key="1">
    <citation type="journal article" date="1986" name="EMBO J.">
        <title>Complete sequence and transcript regulation of a cell adhesion protein from aggregating Dictyostelium cells.</title>
        <authorList>
            <person name="Noegel A."/>
            <person name="Gerisch G."/>
            <person name="Stadler J."/>
            <person name="Westphal M."/>
        </authorList>
    </citation>
    <scope>NUCLEOTIDE SEQUENCE [MRNA]</scope>
</reference>
<reference key="2">
    <citation type="journal article" date="1988" name="Biochem. Cell Biol.">
        <title>Molecular mechanisms of cell-cell interaction in Dictyostelium discoideum.</title>
        <authorList>
            <person name="Siu C.-H."/>
            <person name="Wong L.M."/>
            <person name="Lam T.Y."/>
            <person name="Kamboj R.K."/>
            <person name="Choi A."/>
            <person name="Cho A."/>
        </authorList>
    </citation>
    <scope>NUCLEOTIDE SEQUENCE [MRNA]</scope>
</reference>
<reference key="3">
    <citation type="journal article" date="1992" name="J. Biol. Chem.">
        <title>Identification of a unique cAMP-response element in the gene encoding the cell adhesion molecule gp80 in Dictyostelium discoideum.</title>
        <authorList>
            <person name="Desbarats L."/>
            <person name="Lam T.Y."/>
            <person name="Wong L.M."/>
            <person name="Siu C.-H."/>
        </authorList>
    </citation>
    <scope>NUCLEOTIDE SEQUENCE [GENOMIC DNA]</scope>
    <source>
        <strain>AX2</strain>
    </source>
</reference>
<reference key="4">
    <citation type="journal article" date="2005" name="Nature">
        <title>The genome of the social amoeba Dictyostelium discoideum.</title>
        <authorList>
            <person name="Eichinger L."/>
            <person name="Pachebat J.A."/>
            <person name="Gloeckner G."/>
            <person name="Rajandream M.A."/>
            <person name="Sucgang R."/>
            <person name="Berriman M."/>
            <person name="Song J."/>
            <person name="Olsen R."/>
            <person name="Szafranski K."/>
            <person name="Xu Q."/>
            <person name="Tunggal B."/>
            <person name="Kummerfeld S."/>
            <person name="Madera M."/>
            <person name="Konfortov B.A."/>
            <person name="Rivero F."/>
            <person name="Bankier A.T."/>
            <person name="Lehmann R."/>
            <person name="Hamlin N."/>
            <person name="Davies R."/>
            <person name="Gaudet P."/>
            <person name="Fey P."/>
            <person name="Pilcher K."/>
            <person name="Chen G."/>
            <person name="Saunders D."/>
            <person name="Sodergren E.J."/>
            <person name="Davis P."/>
            <person name="Kerhornou A."/>
            <person name="Nie X."/>
            <person name="Hall N."/>
            <person name="Anjard C."/>
            <person name="Hemphill L."/>
            <person name="Bason N."/>
            <person name="Farbrother P."/>
            <person name="Desany B."/>
            <person name="Just E."/>
            <person name="Morio T."/>
            <person name="Rost R."/>
            <person name="Churcher C.M."/>
            <person name="Cooper J."/>
            <person name="Haydock S."/>
            <person name="van Driessche N."/>
            <person name="Cronin A."/>
            <person name="Goodhead I."/>
            <person name="Muzny D.M."/>
            <person name="Mourier T."/>
            <person name="Pain A."/>
            <person name="Lu M."/>
            <person name="Harper D."/>
            <person name="Lindsay R."/>
            <person name="Hauser H."/>
            <person name="James K.D."/>
            <person name="Quiles M."/>
            <person name="Madan Babu M."/>
            <person name="Saito T."/>
            <person name="Buchrieser C."/>
            <person name="Wardroper A."/>
            <person name="Felder M."/>
            <person name="Thangavelu M."/>
            <person name="Johnson D."/>
            <person name="Knights A."/>
            <person name="Loulseged H."/>
            <person name="Mungall K.L."/>
            <person name="Oliver K."/>
            <person name="Price C."/>
            <person name="Quail M.A."/>
            <person name="Urushihara H."/>
            <person name="Hernandez J."/>
            <person name="Rabbinowitsch E."/>
            <person name="Steffen D."/>
            <person name="Sanders M."/>
            <person name="Ma J."/>
            <person name="Kohara Y."/>
            <person name="Sharp S."/>
            <person name="Simmonds M.N."/>
            <person name="Spiegler S."/>
            <person name="Tivey A."/>
            <person name="Sugano S."/>
            <person name="White B."/>
            <person name="Walker D."/>
            <person name="Woodward J.R."/>
            <person name="Winckler T."/>
            <person name="Tanaka Y."/>
            <person name="Shaulsky G."/>
            <person name="Schleicher M."/>
            <person name="Weinstock G.M."/>
            <person name="Rosenthal A."/>
            <person name="Cox E.C."/>
            <person name="Chisholm R.L."/>
            <person name="Gibbs R.A."/>
            <person name="Loomis W.F."/>
            <person name="Platzer M."/>
            <person name="Kay R.R."/>
            <person name="Williams J.G."/>
            <person name="Dear P.H."/>
            <person name="Noegel A.A."/>
            <person name="Barrell B.G."/>
            <person name="Kuspa A."/>
        </authorList>
    </citation>
    <scope>NUCLEOTIDE SEQUENCE [LARGE SCALE GENOMIC DNA]</scope>
    <source>
        <strain>AX4</strain>
    </source>
</reference>
<reference key="5">
    <citation type="journal article" date="1982" name="Hoppe-Seyler's Z. Physiol. Chem.">
        <title>Improved purification and N-terminal amino acid sequence determination of the contact site A glycoprotein of Dictyostelium discoideum.</title>
        <authorList>
            <person name="Stadler J."/>
            <person name="Bordier C."/>
            <person name="Lottspeich F."/>
            <person name="Henschen A."/>
            <person name="Gerisch G."/>
        </authorList>
    </citation>
    <scope>PROTEIN SEQUENCE OF 20-46</scope>
</reference>
<reference key="6">
    <citation type="journal article" date="1986" name="Proc. Natl. Acad. Sci. U.S.A.">
        <title>Cloning of cDNA for the contact site A glycoprotein of Dictyostelium discoideum.</title>
        <authorList>
            <person name="Wong L.M."/>
            <person name="Siu C.-H."/>
        </authorList>
    </citation>
    <scope>PROTEIN SEQUENCE OF 20-49</scope>
</reference>
<reference key="7">
    <citation type="journal article" date="1989" name="Cell">
        <title>Identification of an octapeptide involved in homophilic interaction of the cell adhesion molecule gp80 of Dictyostelium discoideum.</title>
        <authorList>
            <person name="Kamboj R.K."/>
            <person name="Gariepy J."/>
            <person name="Siu C.-H."/>
        </authorList>
    </citation>
    <scope>PROTEIN SEQUENCE OF 132-139</scope>
</reference>
<reference key="8">
    <citation type="journal article" date="1988" name="J. Cell Biol.">
        <title>Mapping of a cell-binding domain in the cell adhesion molecule gp80 of Dictyostelium discoideum.</title>
        <authorList>
            <person name="Kamboj R.K."/>
            <person name="Wong L.M."/>
            <person name="Lam T.Y."/>
            <person name="Siu C.-H."/>
        </authorList>
    </citation>
    <scope>CELL-BINDING DOMAIN</scope>
</reference>
<reference key="9">
    <citation type="journal article" date="1989" name="EMBO J.">
        <title>The contact site A glycoprotein of Dictyostelium discoideum carries a phospholipid anchor of a novel type.</title>
        <authorList>
            <person name="Stadler J."/>
            <person name="Keenan T.W."/>
            <person name="Bauer G."/>
            <person name="Gerisch G."/>
        </authorList>
    </citation>
    <scope>GPI-ANCHOR</scope>
</reference>
<sequence length="514" mass="53655">MKFLLVLIILYNILNSAHSAPTITAVSNGKFGVPTYITITGTGFTGTPVVTIGGQTCDPVIVANTASLQCQFSAQLAPGNSNFDVIVKVGGVPSTGGNGLFKYTPPTLSTIFPNNGRIGMILVDGPSNISGYKLNVNDSINSAMLSVTADSVSPTIYFLVPNTIAGGLLNLELIQPFGFSTIVTSKSVFSPTITSITPLAFDLTPTNVTVTGKYFGTTASVTMGSHIYTGLTVQDDGTNCHVIFTTRSVYESSNTITAKASTGVDMIYLDNQGNQQPITFTYNPPTITSTKQVNDSVEISTTNTGTDFTQISLTMGTSSPTNLVITGTNEKIVITLPHALPEGEIQFNLKAGISNVVTSTLLVTPVINSVTQAPHNGGSITISGIFLNNAHVSIVVDQNTTDIVCAPDSNGESIICPVEAGSGTINLVVTNYKNFASDPTIKTEATTSTTYTIPDTPTPTDTATPSPTPTETATPSPTPKPTSTPEETEAPSSATTLISPLSLIVIFISFVLLI</sequence>